<comment type="function">
    <text evidence="5">O-glucosyltransferase that transfers glucose toward fucose with a beta-1,3 linkage. Specifically glucosylates O-linked fucosylglycan on TSP type-1 domains of proteins, thereby contributing to elongation of O-fucosylglycan.</text>
</comment>
<comment type="pathway">
    <text>Protein modification; protein glycosylation.</text>
</comment>
<comment type="subcellular location">
    <subcellularLocation>
        <location evidence="2 5">Endoplasmic reticulum membrane</location>
        <topology evidence="5">Single-pass type II membrane protein</topology>
    </subcellularLocation>
</comment>
<comment type="tissue specificity">
    <text evidence="3 5">Widely expressed, with highest levels in testis and uterus.</text>
</comment>
<comment type="disease" evidence="6">
    <disease id="DI-02158">
        <name>Peters-plus syndrome</name>
        <acronym>PTRPLS</acronym>
        <description>An autosomal recessive disorder characterized by anterior eye-chamber abnormalities, disproportionate short stature, developmental delay, characteristic craniofacial features, cleft lip and/or palate.</description>
        <dbReference type="MIM" id="261540"/>
    </disease>
    <text>The disease is caused by variants affecting the gene represented in this entry.</text>
</comment>
<comment type="similarity">
    <text evidence="8">Belongs to the glycosyltransferase 31 family.</text>
</comment>
<feature type="chain" id="PRO_0000252399" description="Beta-1,3-glucosyltransferase">
    <location>
        <begin position="1"/>
        <end position="498"/>
    </location>
</feature>
<feature type="topological domain" description="Cytoplasmic" evidence="1">
    <location>
        <begin position="1"/>
        <end position="6"/>
    </location>
</feature>
<feature type="transmembrane region" description="Helical; Signal-anchor for type II membrane protein" evidence="1">
    <location>
        <begin position="7"/>
        <end position="27"/>
    </location>
</feature>
<feature type="topological domain" description="Lumenal" evidence="1">
    <location>
        <begin position="28"/>
        <end position="498"/>
    </location>
</feature>
<feature type="short sequence motif" description="Prevents secretion from ER">
    <location>
        <begin position="495"/>
        <end position="498"/>
    </location>
</feature>
<feature type="glycosylation site" description="N-linked (GlcNAc...) asparagine" evidence="1">
    <location>
        <position position="336"/>
    </location>
</feature>
<feature type="sequence variant" id="VAR_027849" description="In dbSNP:rs1041073." evidence="3 4 5 7">
    <original>E</original>
    <variation>K</variation>
    <location>
        <position position="370"/>
    </location>
</feature>
<feature type="mutagenesis site" description="Abolishes endoplasmic reticulum localization." evidence="5">
    <location>
        <begin position="495"/>
        <end position="498"/>
    </location>
</feature>
<feature type="sequence conflict" description="In Ref. 6; AAH68595." evidence="8" ref="6">
    <original>I</original>
    <variation>M</variation>
    <location>
        <position position="284"/>
    </location>
</feature>
<name>B3GLT_HUMAN</name>
<accession>Q6Y288</accession>
<accession>A8K5F8</accession>
<accession>Q5W0H2</accession>
<accession>Q6NUI3</accession>
<gene>
    <name evidence="9" type="primary">B3GLCT</name>
    <name type="synonym">B3GALTL</name>
    <name type="synonym">B3GTL</name>
</gene>
<evidence type="ECO:0000255" key="1"/>
<evidence type="ECO:0000255" key="2">
    <source>
        <dbReference type="PROSITE-ProRule" id="PRU10138"/>
    </source>
</evidence>
<evidence type="ECO:0000269" key="3">
    <source>
    </source>
</evidence>
<evidence type="ECO:0000269" key="4">
    <source>
    </source>
</evidence>
<evidence type="ECO:0000269" key="5">
    <source>
    </source>
</evidence>
<evidence type="ECO:0000269" key="6">
    <source>
    </source>
</evidence>
<evidence type="ECO:0000269" key="7">
    <source ref="5"/>
</evidence>
<evidence type="ECO:0000305" key="8"/>
<evidence type="ECO:0000312" key="9">
    <source>
        <dbReference type="HGNC" id="HGNC:20207"/>
    </source>
</evidence>
<organism>
    <name type="scientific">Homo sapiens</name>
    <name type="common">Human</name>
    <dbReference type="NCBI Taxonomy" id="9606"/>
    <lineage>
        <taxon>Eukaryota</taxon>
        <taxon>Metazoa</taxon>
        <taxon>Chordata</taxon>
        <taxon>Craniata</taxon>
        <taxon>Vertebrata</taxon>
        <taxon>Euteleostomi</taxon>
        <taxon>Mammalia</taxon>
        <taxon>Eutheria</taxon>
        <taxon>Euarchontoglires</taxon>
        <taxon>Primates</taxon>
        <taxon>Haplorrhini</taxon>
        <taxon>Catarrhini</taxon>
        <taxon>Hominidae</taxon>
        <taxon>Homo</taxon>
    </lineage>
</organism>
<reference key="1">
    <citation type="journal article" date="2003" name="Biochem. Biophys. Res. Commun.">
        <title>A novel human glycosyltransferase: primary structure and characterization of the gene and transcripts.</title>
        <authorList>
            <person name="Heinonen T.Y.K."/>
            <person name="Pasternack L."/>
            <person name="Lindfors K."/>
            <person name="Breton C."/>
            <person name="Gastinel L.N."/>
            <person name="Maeki M."/>
            <person name="Kainulainen H."/>
        </authorList>
    </citation>
    <scope>NUCLEOTIDE SEQUENCE [MRNA]</scope>
    <scope>TISSUE SPECIFICITY</scope>
    <scope>VARIANT LYS-370</scope>
</reference>
<reference key="2">
    <citation type="journal article" date="2006" name="Glycobiology">
        <title>Molecular cloning and characterization of a novel human beta1,3-glucosyltransferase, which is localized at the endoplasmic reticulum and glucosylates O-linked fucosylglycan on thrombospondin type 1 repeat domain.</title>
        <authorList>
            <person name="Sato T."/>
            <person name="Sato M."/>
            <person name="Kiyohara K."/>
            <person name="Sogabe M."/>
            <person name="Shikanai T."/>
            <person name="Kikuchi N."/>
            <person name="Togayachi A."/>
            <person name="Ishida H."/>
            <person name="Ito H."/>
            <person name="Kameyama A."/>
            <person name="Gotoh M."/>
            <person name="Narimatsu H."/>
        </authorList>
    </citation>
    <scope>NUCLEOTIDE SEQUENCE [MRNA]</scope>
    <scope>FUNCTION</scope>
    <scope>ENZYME ACTIVITY</scope>
    <scope>SUBCELLULAR LOCATION</scope>
    <scope>TISSUE SPECIFICITY</scope>
    <scope>MUTAGENESIS OF 495-ARG--LEU-498</scope>
    <scope>VARIANT LYS-370</scope>
</reference>
<reference key="3">
    <citation type="journal article" date="2004" name="Nat. Genet.">
        <title>Complete sequencing and characterization of 21,243 full-length human cDNAs.</title>
        <authorList>
            <person name="Ota T."/>
            <person name="Suzuki Y."/>
            <person name="Nishikawa T."/>
            <person name="Otsuki T."/>
            <person name="Sugiyama T."/>
            <person name="Irie R."/>
            <person name="Wakamatsu A."/>
            <person name="Hayashi K."/>
            <person name="Sato H."/>
            <person name="Nagai K."/>
            <person name="Kimura K."/>
            <person name="Makita H."/>
            <person name="Sekine M."/>
            <person name="Obayashi M."/>
            <person name="Nishi T."/>
            <person name="Shibahara T."/>
            <person name="Tanaka T."/>
            <person name="Ishii S."/>
            <person name="Yamamoto J."/>
            <person name="Saito K."/>
            <person name="Kawai Y."/>
            <person name="Isono Y."/>
            <person name="Nakamura Y."/>
            <person name="Nagahari K."/>
            <person name="Murakami K."/>
            <person name="Yasuda T."/>
            <person name="Iwayanagi T."/>
            <person name="Wagatsuma M."/>
            <person name="Shiratori A."/>
            <person name="Sudo H."/>
            <person name="Hosoiri T."/>
            <person name="Kaku Y."/>
            <person name="Kodaira H."/>
            <person name="Kondo H."/>
            <person name="Sugawara M."/>
            <person name="Takahashi M."/>
            <person name="Kanda K."/>
            <person name="Yokoi T."/>
            <person name="Furuya T."/>
            <person name="Kikkawa E."/>
            <person name="Omura Y."/>
            <person name="Abe K."/>
            <person name="Kamihara K."/>
            <person name="Katsuta N."/>
            <person name="Sato K."/>
            <person name="Tanikawa M."/>
            <person name="Yamazaki M."/>
            <person name="Ninomiya K."/>
            <person name="Ishibashi T."/>
            <person name="Yamashita H."/>
            <person name="Murakawa K."/>
            <person name="Fujimori K."/>
            <person name="Tanai H."/>
            <person name="Kimata M."/>
            <person name="Watanabe M."/>
            <person name="Hiraoka S."/>
            <person name="Chiba Y."/>
            <person name="Ishida S."/>
            <person name="Ono Y."/>
            <person name="Takiguchi S."/>
            <person name="Watanabe S."/>
            <person name="Yosida M."/>
            <person name="Hotuta T."/>
            <person name="Kusano J."/>
            <person name="Kanehori K."/>
            <person name="Takahashi-Fujii A."/>
            <person name="Hara H."/>
            <person name="Tanase T.-O."/>
            <person name="Nomura Y."/>
            <person name="Togiya S."/>
            <person name="Komai F."/>
            <person name="Hara R."/>
            <person name="Takeuchi K."/>
            <person name="Arita M."/>
            <person name="Imose N."/>
            <person name="Musashino K."/>
            <person name="Yuuki H."/>
            <person name="Oshima A."/>
            <person name="Sasaki N."/>
            <person name="Aotsuka S."/>
            <person name="Yoshikawa Y."/>
            <person name="Matsunawa H."/>
            <person name="Ichihara T."/>
            <person name="Shiohata N."/>
            <person name="Sano S."/>
            <person name="Moriya S."/>
            <person name="Momiyama H."/>
            <person name="Satoh N."/>
            <person name="Takami S."/>
            <person name="Terashima Y."/>
            <person name="Suzuki O."/>
            <person name="Nakagawa S."/>
            <person name="Senoh A."/>
            <person name="Mizoguchi H."/>
            <person name="Goto Y."/>
            <person name="Shimizu F."/>
            <person name="Wakebe H."/>
            <person name="Hishigaki H."/>
            <person name="Watanabe T."/>
            <person name="Sugiyama A."/>
            <person name="Takemoto M."/>
            <person name="Kawakami B."/>
            <person name="Yamazaki M."/>
            <person name="Watanabe K."/>
            <person name="Kumagai A."/>
            <person name="Itakura S."/>
            <person name="Fukuzumi Y."/>
            <person name="Fujimori Y."/>
            <person name="Komiyama M."/>
            <person name="Tashiro H."/>
            <person name="Tanigami A."/>
            <person name="Fujiwara T."/>
            <person name="Ono T."/>
            <person name="Yamada K."/>
            <person name="Fujii Y."/>
            <person name="Ozaki K."/>
            <person name="Hirao M."/>
            <person name="Ohmori Y."/>
            <person name="Kawabata A."/>
            <person name="Hikiji T."/>
            <person name="Kobatake N."/>
            <person name="Inagaki H."/>
            <person name="Ikema Y."/>
            <person name="Okamoto S."/>
            <person name="Okitani R."/>
            <person name="Kawakami T."/>
            <person name="Noguchi S."/>
            <person name="Itoh T."/>
            <person name="Shigeta K."/>
            <person name="Senba T."/>
            <person name="Matsumura K."/>
            <person name="Nakajima Y."/>
            <person name="Mizuno T."/>
            <person name="Morinaga M."/>
            <person name="Sasaki M."/>
            <person name="Togashi T."/>
            <person name="Oyama M."/>
            <person name="Hata H."/>
            <person name="Watanabe M."/>
            <person name="Komatsu T."/>
            <person name="Mizushima-Sugano J."/>
            <person name="Satoh T."/>
            <person name="Shirai Y."/>
            <person name="Takahashi Y."/>
            <person name="Nakagawa K."/>
            <person name="Okumura K."/>
            <person name="Nagase T."/>
            <person name="Nomura N."/>
            <person name="Kikuchi H."/>
            <person name="Masuho Y."/>
            <person name="Yamashita R."/>
            <person name="Nakai K."/>
            <person name="Yada T."/>
            <person name="Nakamura Y."/>
            <person name="Ohara O."/>
            <person name="Isogai T."/>
            <person name="Sugano S."/>
        </authorList>
    </citation>
    <scope>NUCLEOTIDE SEQUENCE [LARGE SCALE MRNA]</scope>
    <scope>VARIANT LYS-370</scope>
</reference>
<reference key="4">
    <citation type="journal article" date="2004" name="Nature">
        <title>The DNA sequence and analysis of human chromosome 13.</title>
        <authorList>
            <person name="Dunham A."/>
            <person name="Matthews L.H."/>
            <person name="Burton J."/>
            <person name="Ashurst J.L."/>
            <person name="Howe K.L."/>
            <person name="Ashcroft K.J."/>
            <person name="Beare D.M."/>
            <person name="Burford D.C."/>
            <person name="Hunt S.E."/>
            <person name="Griffiths-Jones S."/>
            <person name="Jones M.C."/>
            <person name="Keenan S.J."/>
            <person name="Oliver K."/>
            <person name="Scott C.E."/>
            <person name="Ainscough R."/>
            <person name="Almeida J.P."/>
            <person name="Ambrose K.D."/>
            <person name="Andrews D.T."/>
            <person name="Ashwell R.I.S."/>
            <person name="Babbage A.K."/>
            <person name="Bagguley C.L."/>
            <person name="Bailey J."/>
            <person name="Bannerjee R."/>
            <person name="Barlow K.F."/>
            <person name="Bates K."/>
            <person name="Beasley H."/>
            <person name="Bird C.P."/>
            <person name="Bray-Allen S."/>
            <person name="Brown A.J."/>
            <person name="Brown J.Y."/>
            <person name="Burrill W."/>
            <person name="Carder C."/>
            <person name="Carter N.P."/>
            <person name="Chapman J.C."/>
            <person name="Clamp M.E."/>
            <person name="Clark S.Y."/>
            <person name="Clarke G."/>
            <person name="Clee C.M."/>
            <person name="Clegg S.C."/>
            <person name="Cobley V."/>
            <person name="Collins J.E."/>
            <person name="Corby N."/>
            <person name="Coville G.J."/>
            <person name="Deloukas P."/>
            <person name="Dhami P."/>
            <person name="Dunham I."/>
            <person name="Dunn M."/>
            <person name="Earthrowl M.E."/>
            <person name="Ellington A.G."/>
            <person name="Faulkner L."/>
            <person name="Frankish A.G."/>
            <person name="Frankland J."/>
            <person name="French L."/>
            <person name="Garner P."/>
            <person name="Garnett J."/>
            <person name="Gilbert J.G.R."/>
            <person name="Gilson C.J."/>
            <person name="Ghori J."/>
            <person name="Grafham D.V."/>
            <person name="Gribble S.M."/>
            <person name="Griffiths C."/>
            <person name="Hall R.E."/>
            <person name="Hammond S."/>
            <person name="Harley J.L."/>
            <person name="Hart E.A."/>
            <person name="Heath P.D."/>
            <person name="Howden P.J."/>
            <person name="Huckle E.J."/>
            <person name="Hunt P.J."/>
            <person name="Hunt A.R."/>
            <person name="Johnson C."/>
            <person name="Johnson D."/>
            <person name="Kay M."/>
            <person name="Kimberley A.M."/>
            <person name="King A."/>
            <person name="Laird G.K."/>
            <person name="Langford C.J."/>
            <person name="Lawlor S."/>
            <person name="Leongamornlert D.A."/>
            <person name="Lloyd D.M."/>
            <person name="Lloyd C."/>
            <person name="Loveland J.E."/>
            <person name="Lovell J."/>
            <person name="Martin S."/>
            <person name="Mashreghi-Mohammadi M."/>
            <person name="McLaren S.J."/>
            <person name="McMurray A."/>
            <person name="Milne S."/>
            <person name="Moore M.J.F."/>
            <person name="Nickerson T."/>
            <person name="Palmer S.A."/>
            <person name="Pearce A.V."/>
            <person name="Peck A.I."/>
            <person name="Pelan S."/>
            <person name="Phillimore B."/>
            <person name="Porter K.M."/>
            <person name="Rice C.M."/>
            <person name="Searle S."/>
            <person name="Sehra H.K."/>
            <person name="Shownkeen R."/>
            <person name="Skuce C.D."/>
            <person name="Smith M."/>
            <person name="Steward C.A."/>
            <person name="Sycamore N."/>
            <person name="Tester J."/>
            <person name="Thomas D.W."/>
            <person name="Tracey A."/>
            <person name="Tromans A."/>
            <person name="Tubby B."/>
            <person name="Wall M."/>
            <person name="Wallis J.M."/>
            <person name="West A.P."/>
            <person name="Whitehead S.L."/>
            <person name="Willey D.L."/>
            <person name="Wilming L."/>
            <person name="Wray P.W."/>
            <person name="Wright M.W."/>
            <person name="Young L."/>
            <person name="Coulson A."/>
            <person name="Durbin R.M."/>
            <person name="Hubbard T."/>
            <person name="Sulston J.E."/>
            <person name="Beck S."/>
            <person name="Bentley D.R."/>
            <person name="Rogers J."/>
            <person name="Ross M.T."/>
        </authorList>
    </citation>
    <scope>NUCLEOTIDE SEQUENCE [LARGE SCALE GENOMIC DNA]</scope>
</reference>
<reference key="5">
    <citation type="submission" date="2005-07" db="EMBL/GenBank/DDBJ databases">
        <authorList>
            <person name="Mural R.J."/>
            <person name="Istrail S."/>
            <person name="Sutton G.G."/>
            <person name="Florea L."/>
            <person name="Halpern A.L."/>
            <person name="Mobarry C.M."/>
            <person name="Lippert R."/>
            <person name="Walenz B."/>
            <person name="Shatkay H."/>
            <person name="Dew I."/>
            <person name="Miller J.R."/>
            <person name="Flanigan M.J."/>
            <person name="Edwards N.J."/>
            <person name="Bolanos R."/>
            <person name="Fasulo D."/>
            <person name="Halldorsson B.V."/>
            <person name="Hannenhalli S."/>
            <person name="Turner R."/>
            <person name="Yooseph S."/>
            <person name="Lu F."/>
            <person name="Nusskern D.R."/>
            <person name="Shue B.C."/>
            <person name="Zheng X.H."/>
            <person name="Zhong F."/>
            <person name="Delcher A.L."/>
            <person name="Huson D.H."/>
            <person name="Kravitz S.A."/>
            <person name="Mouchard L."/>
            <person name="Reinert K."/>
            <person name="Remington K.A."/>
            <person name="Clark A.G."/>
            <person name="Waterman M.S."/>
            <person name="Eichler E.E."/>
            <person name="Adams M.D."/>
            <person name="Hunkapiller M.W."/>
            <person name="Myers E.W."/>
            <person name="Venter J.C."/>
        </authorList>
    </citation>
    <scope>NUCLEOTIDE SEQUENCE [LARGE SCALE GENOMIC DNA]</scope>
    <scope>VARIANT LYS-370</scope>
</reference>
<reference key="6">
    <citation type="journal article" date="2004" name="Genome Res.">
        <title>The status, quality, and expansion of the NIH full-length cDNA project: the Mammalian Gene Collection (MGC).</title>
        <authorList>
            <consortium name="The MGC Project Team"/>
        </authorList>
    </citation>
    <scope>NUCLEOTIDE SEQUENCE [LARGE SCALE MRNA]</scope>
    <source>
        <tissue>Testis</tissue>
    </source>
</reference>
<reference key="7">
    <citation type="journal article" date="2006" name="Am. J. Hum. Genet.">
        <title>Peters plus syndrome is caused by mutations in B3GALTL, a putative glycosyltransferase.</title>
        <authorList>
            <person name="Lesnik Oberstein S.A."/>
            <person name="Kriek M."/>
            <person name="White S.J."/>
            <person name="Kalf M.E."/>
            <person name="Szuhai K."/>
            <person name="den Dunnen J.T."/>
            <person name="Breuning M.H."/>
            <person name="Hennekam R.C.M."/>
        </authorList>
    </citation>
    <scope>INVOLVEMENT IN PTRPLS</scope>
</reference>
<protein>
    <recommendedName>
        <fullName>Beta-1,3-glucosyltransferase</fullName>
        <shortName>Beta3Glc-T</shortName>
        <ecNumber>2.4.1.-</ecNumber>
    </recommendedName>
    <alternativeName>
        <fullName evidence="9">Beta 3-glucosyltransferase</fullName>
    </alternativeName>
    <alternativeName>
        <fullName>Beta-3-glycosyltransferase-like</fullName>
    </alternativeName>
</protein>
<keyword id="KW-0119">Carbohydrate metabolism</keyword>
<keyword id="KW-0900">Congenital disorder of glycosylation</keyword>
<keyword id="KW-0242">Dwarfism</keyword>
<keyword id="KW-0256">Endoplasmic reticulum</keyword>
<keyword id="KW-0294">Fucose metabolism</keyword>
<keyword id="KW-0325">Glycoprotein</keyword>
<keyword id="KW-0328">Glycosyltransferase</keyword>
<keyword id="KW-0472">Membrane</keyword>
<keyword id="KW-1267">Proteomics identification</keyword>
<keyword id="KW-1185">Reference proteome</keyword>
<keyword id="KW-0735">Signal-anchor</keyword>
<keyword id="KW-0808">Transferase</keyword>
<keyword id="KW-0812">Transmembrane</keyword>
<keyword id="KW-1133">Transmembrane helix</keyword>
<proteinExistence type="evidence at protein level"/>
<dbReference type="EC" id="2.4.1.-"/>
<dbReference type="EMBL" id="AY190526">
    <property type="protein sequence ID" value="AAO37647.1"/>
    <property type="molecule type" value="mRNA"/>
</dbReference>
<dbReference type="EMBL" id="AB101481">
    <property type="protein sequence ID" value="BAD13528.1"/>
    <property type="molecule type" value="mRNA"/>
</dbReference>
<dbReference type="EMBL" id="AK291273">
    <property type="protein sequence ID" value="BAF83962.1"/>
    <property type="molecule type" value="mRNA"/>
</dbReference>
<dbReference type="EMBL" id="AL137142">
    <property type="status" value="NOT_ANNOTATED_CDS"/>
    <property type="molecule type" value="Genomic_DNA"/>
</dbReference>
<dbReference type="EMBL" id="AL138965">
    <property type="status" value="NOT_ANNOTATED_CDS"/>
    <property type="molecule type" value="Genomic_DNA"/>
</dbReference>
<dbReference type="EMBL" id="CH471075">
    <property type="protein sequence ID" value="EAX08483.1"/>
    <property type="molecule type" value="Genomic_DNA"/>
</dbReference>
<dbReference type="EMBL" id="BC068595">
    <property type="protein sequence ID" value="AAH68595.1"/>
    <property type="molecule type" value="mRNA"/>
</dbReference>
<dbReference type="CCDS" id="CCDS9341.1"/>
<dbReference type="RefSeq" id="NP_919299.3">
    <property type="nucleotide sequence ID" value="NM_194318.3"/>
</dbReference>
<dbReference type="SMR" id="Q6Y288"/>
<dbReference type="BioGRID" id="126890">
    <property type="interactions" value="40"/>
</dbReference>
<dbReference type="FunCoup" id="Q6Y288">
    <property type="interactions" value="612"/>
</dbReference>
<dbReference type="IntAct" id="Q6Y288">
    <property type="interactions" value="21"/>
</dbReference>
<dbReference type="STRING" id="9606.ENSP00000343002"/>
<dbReference type="CAZy" id="GT31">
    <property type="family name" value="Glycosyltransferase Family 31"/>
</dbReference>
<dbReference type="GlyCosmos" id="Q6Y288">
    <property type="glycosylation" value="1 site, No reported glycans"/>
</dbReference>
<dbReference type="GlyGen" id="Q6Y288">
    <property type="glycosylation" value="3 sites, 5 N-linked glycans (1 site), 1 O-linked glycan (1 site)"/>
</dbReference>
<dbReference type="iPTMnet" id="Q6Y288"/>
<dbReference type="PhosphoSitePlus" id="Q6Y288"/>
<dbReference type="SwissPalm" id="Q6Y288"/>
<dbReference type="BioMuta" id="B3GLCT"/>
<dbReference type="DMDM" id="116243011"/>
<dbReference type="jPOST" id="Q6Y288"/>
<dbReference type="MassIVE" id="Q6Y288"/>
<dbReference type="PaxDb" id="9606-ENSP00000343002"/>
<dbReference type="PeptideAtlas" id="Q6Y288"/>
<dbReference type="ProteomicsDB" id="67832"/>
<dbReference type="Pumba" id="Q6Y288"/>
<dbReference type="Antibodypedia" id="2712">
    <property type="antibodies" value="106 antibodies from 25 providers"/>
</dbReference>
<dbReference type="DNASU" id="145173"/>
<dbReference type="Ensembl" id="ENST00000343307.5">
    <property type="protein sequence ID" value="ENSP00000343002.4"/>
    <property type="gene ID" value="ENSG00000187676.8"/>
</dbReference>
<dbReference type="GeneID" id="145173"/>
<dbReference type="KEGG" id="hsa:145173"/>
<dbReference type="MANE-Select" id="ENST00000343307.5">
    <property type="protein sequence ID" value="ENSP00000343002.4"/>
    <property type="RefSeq nucleotide sequence ID" value="NM_194318.4"/>
    <property type="RefSeq protein sequence ID" value="NP_919299.3"/>
</dbReference>
<dbReference type="UCSC" id="uc010aaz.4">
    <property type="organism name" value="human"/>
</dbReference>
<dbReference type="AGR" id="HGNC:20207"/>
<dbReference type="CTD" id="145173"/>
<dbReference type="DisGeNET" id="145173"/>
<dbReference type="GeneCards" id="B3GLCT"/>
<dbReference type="GeneReviews" id="B3GLCT"/>
<dbReference type="HGNC" id="HGNC:20207">
    <property type="gene designation" value="B3GLCT"/>
</dbReference>
<dbReference type="HPA" id="ENSG00000187676">
    <property type="expression patterns" value="Low tissue specificity"/>
</dbReference>
<dbReference type="MalaCards" id="B3GLCT"/>
<dbReference type="MIM" id="261540">
    <property type="type" value="phenotype"/>
</dbReference>
<dbReference type="MIM" id="610308">
    <property type="type" value="gene"/>
</dbReference>
<dbReference type="neXtProt" id="NX_Q6Y288"/>
<dbReference type="OpenTargets" id="ENSG00000187676"/>
<dbReference type="Orphanet" id="709">
    <property type="disease" value="Peters plus syndrome"/>
</dbReference>
<dbReference type="PharmGKB" id="PA144596515"/>
<dbReference type="VEuPathDB" id="HostDB:ENSG00000187676"/>
<dbReference type="eggNOG" id="KOG2246">
    <property type="taxonomic scope" value="Eukaryota"/>
</dbReference>
<dbReference type="GeneTree" id="ENSGT00940000155499"/>
<dbReference type="HOGENOM" id="CLU_030081_1_1_1"/>
<dbReference type="InParanoid" id="Q6Y288"/>
<dbReference type="OMA" id="CATYPRF"/>
<dbReference type="OrthoDB" id="421979at2759"/>
<dbReference type="PAN-GO" id="Q6Y288">
    <property type="GO annotations" value="1 GO annotation based on evolutionary models"/>
</dbReference>
<dbReference type="PhylomeDB" id="Q6Y288"/>
<dbReference type="TreeFam" id="TF313496"/>
<dbReference type="PathwayCommons" id="Q6Y288"/>
<dbReference type="Reactome" id="R-HSA-5083635">
    <property type="pathway name" value="Defective B3GALTL causes PpS"/>
</dbReference>
<dbReference type="Reactome" id="R-HSA-5173214">
    <property type="pathway name" value="O-glycosylation of TSR domain-containing proteins"/>
</dbReference>
<dbReference type="SignaLink" id="Q6Y288"/>
<dbReference type="UniPathway" id="UPA00378"/>
<dbReference type="BioGRID-ORCS" id="145173">
    <property type="hits" value="16 hits in 1148 CRISPR screens"/>
</dbReference>
<dbReference type="ChiTaRS" id="B3GLCT">
    <property type="organism name" value="human"/>
</dbReference>
<dbReference type="GeneWiki" id="B3GALTL"/>
<dbReference type="GenomeRNAi" id="145173"/>
<dbReference type="Pharos" id="Q6Y288">
    <property type="development level" value="Tbio"/>
</dbReference>
<dbReference type="PRO" id="PR:Q6Y288"/>
<dbReference type="Proteomes" id="UP000005640">
    <property type="component" value="Chromosome 13"/>
</dbReference>
<dbReference type="RNAct" id="Q6Y288">
    <property type="molecule type" value="protein"/>
</dbReference>
<dbReference type="Bgee" id="ENSG00000187676">
    <property type="expression patterns" value="Expressed in left ventricle myocardium and 147 other cell types or tissues"/>
</dbReference>
<dbReference type="GO" id="GO:0005789">
    <property type="term" value="C:endoplasmic reticulum membrane"/>
    <property type="evidence" value="ECO:0000304"/>
    <property type="project" value="Reactome"/>
</dbReference>
<dbReference type="GO" id="GO:0008375">
    <property type="term" value="F:acetylglucosaminyltransferase activity"/>
    <property type="evidence" value="ECO:0000318"/>
    <property type="project" value="GO_Central"/>
</dbReference>
<dbReference type="GO" id="GO:0016757">
    <property type="term" value="F:glycosyltransferase activity"/>
    <property type="evidence" value="ECO:0000304"/>
    <property type="project" value="Reactome"/>
</dbReference>
<dbReference type="GO" id="GO:0007420">
    <property type="term" value="P:brain development"/>
    <property type="evidence" value="ECO:0007669"/>
    <property type="project" value="Ensembl"/>
</dbReference>
<dbReference type="GO" id="GO:0043010">
    <property type="term" value="P:camera-type eye development"/>
    <property type="evidence" value="ECO:0007669"/>
    <property type="project" value="Ensembl"/>
</dbReference>
<dbReference type="GO" id="GO:0060271">
    <property type="term" value="P:cilium assembly"/>
    <property type="evidence" value="ECO:0007669"/>
    <property type="project" value="Ensembl"/>
</dbReference>
<dbReference type="GO" id="GO:1904888">
    <property type="term" value="P:cranial skeletal system development"/>
    <property type="evidence" value="ECO:0007669"/>
    <property type="project" value="Ensembl"/>
</dbReference>
<dbReference type="GO" id="GO:0006004">
    <property type="term" value="P:fucose metabolic process"/>
    <property type="evidence" value="ECO:0007669"/>
    <property type="project" value="UniProtKB-KW"/>
</dbReference>
<dbReference type="GO" id="GO:0010467">
    <property type="term" value="P:gene expression"/>
    <property type="evidence" value="ECO:0007669"/>
    <property type="project" value="Ensembl"/>
</dbReference>
<dbReference type="GO" id="GO:0060173">
    <property type="term" value="P:limb development"/>
    <property type="evidence" value="ECO:0007669"/>
    <property type="project" value="Ensembl"/>
</dbReference>
<dbReference type="GO" id="GO:0036066">
    <property type="term" value="P:protein O-linked fucosylation"/>
    <property type="evidence" value="ECO:0000304"/>
    <property type="project" value="Reactome"/>
</dbReference>
<dbReference type="GO" id="GO:0009306">
    <property type="term" value="P:protein secretion"/>
    <property type="evidence" value="ECO:0007669"/>
    <property type="project" value="Ensembl"/>
</dbReference>
<dbReference type="GO" id="GO:0060021">
    <property type="term" value="P:roof of mouth development"/>
    <property type="evidence" value="ECO:0007669"/>
    <property type="project" value="Ensembl"/>
</dbReference>
<dbReference type="GO" id="GO:0001501">
    <property type="term" value="P:skeletal system development"/>
    <property type="evidence" value="ECO:0007669"/>
    <property type="project" value="Ensembl"/>
</dbReference>
<dbReference type="FunFam" id="3.90.550.50:FF:000021">
    <property type="entry name" value="Beta 3-glucosyltransferase"/>
    <property type="match status" value="1"/>
</dbReference>
<dbReference type="FunFam" id="3.90.550.50:FF:000008">
    <property type="entry name" value="Beta-1,3-glucosyltransferase"/>
    <property type="match status" value="1"/>
</dbReference>
<dbReference type="Gene3D" id="3.90.550.50">
    <property type="match status" value="2"/>
</dbReference>
<dbReference type="InterPro" id="IPR003378">
    <property type="entry name" value="Fringe-like_glycosylTrfase"/>
</dbReference>
<dbReference type="InterPro" id="IPR029044">
    <property type="entry name" value="Nucleotide-diphossugar_trans"/>
</dbReference>
<dbReference type="PANTHER" id="PTHR10811">
    <property type="entry name" value="FRINGE-RELATED"/>
    <property type="match status" value="1"/>
</dbReference>
<dbReference type="Pfam" id="PF02434">
    <property type="entry name" value="Fringe"/>
    <property type="match status" value="2"/>
</dbReference>
<dbReference type="SUPFAM" id="SSF53448">
    <property type="entry name" value="Nucleotide-diphospho-sugar transferases"/>
    <property type="match status" value="1"/>
</dbReference>
<dbReference type="PROSITE" id="PS00014">
    <property type="entry name" value="ER_TARGET"/>
    <property type="match status" value="1"/>
</dbReference>
<sequence length="498" mass="56564">MRPPACWWLLAPPALLALLTCSLAFGLASEDTKKEVKQSQDLEKSGISRKNDIDLKGIVFVIQSQSNSFHAKRAEQLKKSILKQAADLTQELPSVLLLHQLAKQEGAWTILPLLPHFSVTYSRNSSWIFFCEEETRIQIPKLLETLRRYDPSKEWFLGKALHDEEATIIHHYAFSENPTVFKYPDFAAGWALSIPLVNKLTKRLKSESLKSDFTIDLKHEIALYIWDKGGGPPLTPVPEFCTNDVDFYCATTFHSFLPLCRKPVKKKDIFVAVKTCKKFHGDRIPIVKQTWESQASLIEYYSDYTENSIPTVDLGIPNTDRGHCGKTFAILERFLNRSQDKTAWLVIVDDDTLISISRLQHLLSCYDSGEPVFLGERYGYGLGTGGYSYITGGGGMVFSREAVRRLLASKCRCYSNDAPDDMVLGMCFSGLGIPVTHSPLFHQARPVDYPKDYLSHQVPISFHKHWNIDPVKVYFTWLAPSDEDKARQETQKGFREEL</sequence>